<dbReference type="EC" id="5.4.99.24"/>
<dbReference type="EMBL" id="AE016795">
    <property type="protein sequence ID" value="AAO11343.1"/>
    <property type="molecule type" value="Genomic_DNA"/>
</dbReference>
<dbReference type="RefSeq" id="WP_011080826.1">
    <property type="nucleotide sequence ID" value="NC_004459.3"/>
</dbReference>
<dbReference type="SMR" id="Q8D8G1"/>
<dbReference type="KEGG" id="vvu:VV1_3016"/>
<dbReference type="HOGENOM" id="CLU_016902_1_1_6"/>
<dbReference type="Proteomes" id="UP000002275">
    <property type="component" value="Chromosome 1"/>
</dbReference>
<dbReference type="GO" id="GO:0160141">
    <property type="term" value="F:23S rRNA pseudouridine(955/2504/2580) synthase activity"/>
    <property type="evidence" value="ECO:0007669"/>
    <property type="project" value="UniProtKB-EC"/>
</dbReference>
<dbReference type="GO" id="GO:0003723">
    <property type="term" value="F:RNA binding"/>
    <property type="evidence" value="ECO:0007669"/>
    <property type="project" value="UniProtKB-KW"/>
</dbReference>
<dbReference type="GO" id="GO:0000455">
    <property type="term" value="P:enzyme-directed rRNA pseudouridine synthesis"/>
    <property type="evidence" value="ECO:0007669"/>
    <property type="project" value="UniProtKB-ARBA"/>
</dbReference>
<dbReference type="CDD" id="cd02869">
    <property type="entry name" value="PseudoU_synth_RluA_like"/>
    <property type="match status" value="1"/>
</dbReference>
<dbReference type="CDD" id="cd00165">
    <property type="entry name" value="S4"/>
    <property type="match status" value="1"/>
</dbReference>
<dbReference type="FunFam" id="3.10.290.10:FF:000010">
    <property type="entry name" value="Pseudouridine synthase"/>
    <property type="match status" value="1"/>
</dbReference>
<dbReference type="Gene3D" id="3.30.2350.10">
    <property type="entry name" value="Pseudouridine synthase"/>
    <property type="match status" value="1"/>
</dbReference>
<dbReference type="Gene3D" id="3.10.290.10">
    <property type="entry name" value="RNA-binding S4 domain"/>
    <property type="match status" value="1"/>
</dbReference>
<dbReference type="InterPro" id="IPR020103">
    <property type="entry name" value="PsdUridine_synth_cat_dom_sf"/>
</dbReference>
<dbReference type="InterPro" id="IPR006224">
    <property type="entry name" value="PsdUridine_synth_RluA-like_CS"/>
</dbReference>
<dbReference type="InterPro" id="IPR006225">
    <property type="entry name" value="PsdUridine_synth_RluC/D"/>
</dbReference>
<dbReference type="InterPro" id="IPR006145">
    <property type="entry name" value="PsdUridine_synth_RsuA/RluA"/>
</dbReference>
<dbReference type="InterPro" id="IPR050188">
    <property type="entry name" value="RluA_PseudoU_synthase"/>
</dbReference>
<dbReference type="InterPro" id="IPR002942">
    <property type="entry name" value="S4_RNA-bd"/>
</dbReference>
<dbReference type="InterPro" id="IPR036986">
    <property type="entry name" value="S4_RNA-bd_sf"/>
</dbReference>
<dbReference type="NCBIfam" id="NF008249">
    <property type="entry name" value="PRK11025.1"/>
    <property type="match status" value="1"/>
</dbReference>
<dbReference type="NCBIfam" id="TIGR00005">
    <property type="entry name" value="rluA_subfam"/>
    <property type="match status" value="1"/>
</dbReference>
<dbReference type="PANTHER" id="PTHR21600">
    <property type="entry name" value="MITOCHONDRIAL RNA PSEUDOURIDINE SYNTHASE"/>
    <property type="match status" value="1"/>
</dbReference>
<dbReference type="PANTHER" id="PTHR21600:SF92">
    <property type="entry name" value="RIBOSOMAL LARGE SUBUNIT PSEUDOURIDINE SYNTHASE C"/>
    <property type="match status" value="1"/>
</dbReference>
<dbReference type="Pfam" id="PF00849">
    <property type="entry name" value="PseudoU_synth_2"/>
    <property type="match status" value="1"/>
</dbReference>
<dbReference type="Pfam" id="PF01479">
    <property type="entry name" value="S4"/>
    <property type="match status" value="1"/>
</dbReference>
<dbReference type="SMART" id="SM00363">
    <property type="entry name" value="S4"/>
    <property type="match status" value="1"/>
</dbReference>
<dbReference type="SUPFAM" id="SSF55174">
    <property type="entry name" value="Alpha-L RNA-binding motif"/>
    <property type="match status" value="1"/>
</dbReference>
<dbReference type="SUPFAM" id="SSF55120">
    <property type="entry name" value="Pseudouridine synthase"/>
    <property type="match status" value="1"/>
</dbReference>
<dbReference type="PROSITE" id="PS01129">
    <property type="entry name" value="PSI_RLU"/>
    <property type="match status" value="1"/>
</dbReference>
<dbReference type="PROSITE" id="PS50889">
    <property type="entry name" value="S4"/>
    <property type="match status" value="1"/>
</dbReference>
<sequence length="315" mass="35896">MNEIRTKVQIVDIDEDMAGQRIDNFLRNQLKDVPKSMIYRIVRKGEVRVNKKRVKAEYKLAAGDVVRIPPVTLEKKDPETAPSTKLNKVAELQDLIIYEDDHLLVLNKPSGTAVHGGSGLKFGAIEALRALRPEARFLELVHRIDRDTSGILLVAKKRSALRHLQAQFREKTVQKYYFALVMGEWKNSCKVVNAPLLKNEVNSIVRVNPNGKPSETRFKVIEKFPQATLVQASPITGRTHQIRVHTQYSGHPIAWDDRYGDRRFDAYTAQHGLNRLFLHAANIRFTHPATEQPMEINAPMGEQLEKVVQSLRTSR</sequence>
<reference key="1">
    <citation type="submission" date="2002-12" db="EMBL/GenBank/DDBJ databases">
        <title>Complete genome sequence of Vibrio vulnificus CMCP6.</title>
        <authorList>
            <person name="Rhee J.H."/>
            <person name="Kim S.Y."/>
            <person name="Chung S.S."/>
            <person name="Kim J.J."/>
            <person name="Moon Y.H."/>
            <person name="Jeong H."/>
            <person name="Choy H.E."/>
        </authorList>
    </citation>
    <scope>NUCLEOTIDE SEQUENCE [LARGE SCALE GENOMIC DNA]</scope>
    <source>
        <strain>CMCP6</strain>
    </source>
</reference>
<organism>
    <name type="scientific">Vibrio vulnificus (strain CMCP6)</name>
    <dbReference type="NCBI Taxonomy" id="216895"/>
    <lineage>
        <taxon>Bacteria</taxon>
        <taxon>Pseudomonadati</taxon>
        <taxon>Pseudomonadota</taxon>
        <taxon>Gammaproteobacteria</taxon>
        <taxon>Vibrionales</taxon>
        <taxon>Vibrionaceae</taxon>
        <taxon>Vibrio</taxon>
    </lineage>
</organism>
<evidence type="ECO:0000250" key="1"/>
<evidence type="ECO:0000255" key="2">
    <source>
        <dbReference type="PROSITE-ProRule" id="PRU00182"/>
    </source>
</evidence>
<evidence type="ECO:0000305" key="3"/>
<proteinExistence type="inferred from homology"/>
<gene>
    <name type="primary">rluC</name>
    <name type="ordered locus">VV1_3016</name>
</gene>
<keyword id="KW-0413">Isomerase</keyword>
<keyword id="KW-0694">RNA-binding</keyword>
<keyword id="KW-0698">rRNA processing</keyword>
<accession>Q8D8G1</accession>
<name>RLUC_VIBVU</name>
<protein>
    <recommendedName>
        <fullName>Ribosomal large subunit pseudouridine synthase C</fullName>
        <ecNumber>5.4.99.24</ecNumber>
    </recommendedName>
    <alternativeName>
        <fullName>23S rRNA pseudouridine(955/2504/2580) synthase</fullName>
    </alternativeName>
    <alternativeName>
        <fullName>rRNA pseudouridylate synthase C</fullName>
    </alternativeName>
    <alternativeName>
        <fullName>rRNA-uridine isomerase C</fullName>
    </alternativeName>
</protein>
<feature type="chain" id="PRO_0000162681" description="Ribosomal large subunit pseudouridine synthase C">
    <location>
        <begin position="1"/>
        <end position="315"/>
    </location>
</feature>
<feature type="domain" description="S4 RNA-binding" evidence="2">
    <location>
        <begin position="20"/>
        <end position="93"/>
    </location>
</feature>
<feature type="active site" evidence="1">
    <location>
        <position position="145"/>
    </location>
</feature>
<comment type="function">
    <text evidence="1">Responsible for synthesis of pseudouridine from uracil at positions 955, 2504 and 2580 in 23S ribosomal RNA.</text>
</comment>
<comment type="catalytic activity">
    <reaction>
        <text>uridine(955/2504/2580) in 23S rRNA = pseudouridine(955/2504/2580) in 23S rRNA</text>
        <dbReference type="Rhea" id="RHEA:42528"/>
        <dbReference type="Rhea" id="RHEA-COMP:10099"/>
        <dbReference type="Rhea" id="RHEA-COMP:10100"/>
        <dbReference type="ChEBI" id="CHEBI:65314"/>
        <dbReference type="ChEBI" id="CHEBI:65315"/>
        <dbReference type="EC" id="5.4.99.24"/>
    </reaction>
</comment>
<comment type="similarity">
    <text evidence="3">Belongs to the pseudouridine synthase RluA family.</text>
</comment>